<sequence>MKKGKLGAIVFGLLFTSSVAGFSKDLTKDNAYQDLNVIEHLISLKYAPLPWKELLFGWDLSQQTQQARLQLVLEEKPTTNYCQKVLSNYVRSLNDYHAGITFYRTESAYIPYVLKLSEDGHVFVVDVQTSQGDIYLGDEILEVDGMGIREAIESLRFGRGSATDYSAAVRSLTSRSAAFGDAVPSGIAMLKLRRPSGLIRSTPVRWRYTPEHIGDFSLVAPLIPEHKPQLPTQSCVLFRSGVNSQSSSSSLFSSYMVPYFWEELRVQNKQRFDSNHHIGSRNGFLPTFGPILWEQDKGPYRSYIFKAKDSQGNPHRIGFLRISSYVWTDLEGLEEDHKDSPWELFGEIIDHLEKETDALIIDQTHNPGGSVFYLYSLLSMLTDHPLDTPKHRMIFTQDEVSSALHWQDLLEDVFTDEQAVAVLGETMEGYCMDMHAVASLQNFSQSVLSSWVSGDINLSKPMPLLGFAQVRPHPKHQYTKPLFMLIDEDDFSCGDLAPAILKDNGRATLIGKPTAGAGGFVFQVTFPNRSGIKGLSLTGSLAVRKDGEFIENLGVAPHIDLGFTSRDLQTSRFTDYVEAVKTIVLTSLSENAKKSEEQTSPQETPEVIRVSYPTTTSAL</sequence>
<dbReference type="EMBL" id="AE001363">
    <property type="protein sequence ID" value="AAD19153.1"/>
    <property type="molecule type" value="Genomic_DNA"/>
</dbReference>
<dbReference type="EMBL" id="AE002161">
    <property type="protein sequence ID" value="AAF38630.1"/>
    <property type="molecule type" value="Genomic_DNA"/>
</dbReference>
<dbReference type="EMBL" id="BA000008">
    <property type="protein sequence ID" value="BAA99223.1"/>
    <property type="molecule type" value="Genomic_DNA"/>
</dbReference>
<dbReference type="EMBL" id="AE009440">
    <property type="protein sequence ID" value="AAP98983.1"/>
    <property type="molecule type" value="Genomic_DNA"/>
</dbReference>
<dbReference type="PIR" id="E86617">
    <property type="entry name" value="E86617"/>
</dbReference>
<dbReference type="PIR" id="F72006">
    <property type="entry name" value="F72006"/>
</dbReference>
<dbReference type="PIR" id="F81532">
    <property type="entry name" value="F81532"/>
</dbReference>
<dbReference type="RefSeq" id="NP_225210.1">
    <property type="nucleotide sequence ID" value="NC_000922.1"/>
</dbReference>
<dbReference type="RefSeq" id="WP_010883649.1">
    <property type="nucleotide sequence ID" value="NZ_LN847257.1"/>
</dbReference>
<dbReference type="RefSeq" id="WP_010892195.1">
    <property type="nucleotide sequence ID" value="NZ_LN846995.1"/>
</dbReference>
<dbReference type="SMR" id="Q9Z6P3"/>
<dbReference type="STRING" id="406984.CPK_ORF00442"/>
<dbReference type="MEROPS" id="S41.011"/>
<dbReference type="GeneID" id="45051073"/>
<dbReference type="KEGG" id="cpa:CP_0837"/>
<dbReference type="KEGG" id="cpj:CPj1016"/>
<dbReference type="KEGG" id="cpn:CPn_1016"/>
<dbReference type="KEGG" id="cpt:CpB1054"/>
<dbReference type="PATRIC" id="fig|115713.3.peg.1113"/>
<dbReference type="eggNOG" id="COG0793">
    <property type="taxonomic scope" value="Bacteria"/>
</dbReference>
<dbReference type="HOGENOM" id="CLU_452499_0_0_0"/>
<dbReference type="OrthoDB" id="16754at2"/>
<dbReference type="Proteomes" id="UP000000583">
    <property type="component" value="Chromosome"/>
</dbReference>
<dbReference type="Proteomes" id="UP000000801">
    <property type="component" value="Chromosome"/>
</dbReference>
<dbReference type="GO" id="GO:0030288">
    <property type="term" value="C:outer membrane-bounded periplasmic space"/>
    <property type="evidence" value="ECO:0007669"/>
    <property type="project" value="TreeGrafter"/>
</dbReference>
<dbReference type="GO" id="GO:0004175">
    <property type="term" value="F:endopeptidase activity"/>
    <property type="evidence" value="ECO:0007669"/>
    <property type="project" value="TreeGrafter"/>
</dbReference>
<dbReference type="GO" id="GO:0008236">
    <property type="term" value="F:serine-type peptidase activity"/>
    <property type="evidence" value="ECO:0007669"/>
    <property type="project" value="InterPro"/>
</dbReference>
<dbReference type="GO" id="GO:0006508">
    <property type="term" value="P:proteolysis"/>
    <property type="evidence" value="ECO:0007669"/>
    <property type="project" value="InterPro"/>
</dbReference>
<dbReference type="GO" id="GO:0007165">
    <property type="term" value="P:signal transduction"/>
    <property type="evidence" value="ECO:0007669"/>
    <property type="project" value="TreeGrafter"/>
</dbReference>
<dbReference type="CDD" id="cd07563">
    <property type="entry name" value="Peptidase_S41_IRBP"/>
    <property type="match status" value="1"/>
</dbReference>
<dbReference type="Gene3D" id="1.20.920.70">
    <property type="match status" value="1"/>
</dbReference>
<dbReference type="Gene3D" id="3.90.226.10">
    <property type="entry name" value="2-enoyl-CoA Hydratase, Chain A, domain 1"/>
    <property type="match status" value="1"/>
</dbReference>
<dbReference type="InterPro" id="IPR029045">
    <property type="entry name" value="ClpP/crotonase-like_dom_sf"/>
</dbReference>
<dbReference type="InterPro" id="IPR041126">
    <property type="entry name" value="CPAF_PDZ"/>
</dbReference>
<dbReference type="InterPro" id="IPR005151">
    <property type="entry name" value="Tail-specific_protease"/>
</dbReference>
<dbReference type="NCBIfam" id="NF033424">
    <property type="entry name" value="chlamy_CPAF"/>
    <property type="match status" value="1"/>
</dbReference>
<dbReference type="PANTHER" id="PTHR32060:SF30">
    <property type="entry name" value="CARBOXY-TERMINAL PROCESSING PROTEASE CTPA"/>
    <property type="match status" value="1"/>
</dbReference>
<dbReference type="PANTHER" id="PTHR32060">
    <property type="entry name" value="TAIL-SPECIFIC PROTEASE"/>
    <property type="match status" value="1"/>
</dbReference>
<dbReference type="Pfam" id="PF17816">
    <property type="entry name" value="PDZ_4"/>
    <property type="match status" value="1"/>
</dbReference>
<dbReference type="Pfam" id="PF03572">
    <property type="entry name" value="Peptidase_S41"/>
    <property type="match status" value="1"/>
</dbReference>
<dbReference type="SMART" id="SM00245">
    <property type="entry name" value="TSPc"/>
    <property type="match status" value="1"/>
</dbReference>
<dbReference type="SUPFAM" id="SSF52096">
    <property type="entry name" value="ClpP/crotonase"/>
    <property type="match status" value="1"/>
</dbReference>
<organism>
    <name type="scientific">Chlamydia pneumoniae</name>
    <name type="common">Chlamydophila pneumoniae</name>
    <dbReference type="NCBI Taxonomy" id="83558"/>
    <lineage>
        <taxon>Bacteria</taxon>
        <taxon>Pseudomonadati</taxon>
        <taxon>Chlamydiota</taxon>
        <taxon>Chlamydiia</taxon>
        <taxon>Chlamydiales</taxon>
        <taxon>Chlamydiaceae</taxon>
        <taxon>Chlamydia/Chlamydophila group</taxon>
        <taxon>Chlamydia</taxon>
    </lineage>
</organism>
<reference key="1">
    <citation type="journal article" date="1999" name="Nat. Genet.">
        <title>Comparative genomes of Chlamydia pneumoniae and C. trachomatis.</title>
        <authorList>
            <person name="Kalman S."/>
            <person name="Mitchell W.P."/>
            <person name="Marathe R."/>
            <person name="Lammel C.J."/>
            <person name="Fan J."/>
            <person name="Hyman R.W."/>
            <person name="Olinger L."/>
            <person name="Grimwood J."/>
            <person name="Davis R.W."/>
            <person name="Stephens R.S."/>
        </authorList>
    </citation>
    <scope>NUCLEOTIDE SEQUENCE [LARGE SCALE GENOMIC DNA]</scope>
    <source>
        <strain>CWL029</strain>
    </source>
</reference>
<reference key="2">
    <citation type="journal article" date="2000" name="Nucleic Acids Res.">
        <title>Genome sequences of Chlamydia trachomatis MoPn and Chlamydia pneumoniae AR39.</title>
        <authorList>
            <person name="Read T.D."/>
            <person name="Brunham R.C."/>
            <person name="Shen C."/>
            <person name="Gill S.R."/>
            <person name="Heidelberg J.F."/>
            <person name="White O."/>
            <person name="Hickey E.K."/>
            <person name="Peterson J.D."/>
            <person name="Utterback T.R."/>
            <person name="Berry K.J."/>
            <person name="Bass S."/>
            <person name="Linher K.D."/>
            <person name="Weidman J.F."/>
            <person name="Khouri H.M."/>
            <person name="Craven B."/>
            <person name="Bowman C."/>
            <person name="Dodson R.J."/>
            <person name="Gwinn M.L."/>
            <person name="Nelson W.C."/>
            <person name="DeBoy R.T."/>
            <person name="Kolonay J.F."/>
            <person name="McClarty G."/>
            <person name="Salzberg S.L."/>
            <person name="Eisen J.A."/>
            <person name="Fraser C.M."/>
        </authorList>
    </citation>
    <scope>NUCLEOTIDE SEQUENCE [LARGE SCALE GENOMIC DNA]</scope>
    <source>
        <strain>AR39</strain>
    </source>
</reference>
<reference key="3">
    <citation type="journal article" date="2000" name="Nucleic Acids Res.">
        <title>Comparison of whole genome sequences of Chlamydia pneumoniae J138 from Japan and CWL029 from USA.</title>
        <authorList>
            <person name="Shirai M."/>
            <person name="Hirakawa H."/>
            <person name="Kimoto M."/>
            <person name="Tabuchi M."/>
            <person name="Kishi F."/>
            <person name="Ouchi K."/>
            <person name="Shiba T."/>
            <person name="Ishii K."/>
            <person name="Hattori M."/>
            <person name="Kuhara S."/>
            <person name="Nakazawa T."/>
        </authorList>
    </citation>
    <scope>NUCLEOTIDE SEQUENCE [LARGE SCALE GENOMIC DNA]</scope>
    <source>
        <strain>J138</strain>
    </source>
</reference>
<reference key="4">
    <citation type="submission" date="2002-05" db="EMBL/GenBank/DDBJ databases">
        <title>The genome sequence of Chlamydia pneumoniae TW183 and comparison with other Chlamydia strains based on whole genome sequence analysis.</title>
        <authorList>
            <person name="Geng M.M."/>
            <person name="Schuhmacher A."/>
            <person name="Muehldorfer I."/>
            <person name="Bensch K.W."/>
            <person name="Schaefer K.P."/>
            <person name="Schneider S."/>
            <person name="Pohl T."/>
            <person name="Essig A."/>
            <person name="Marre R."/>
            <person name="Melchers K."/>
        </authorList>
    </citation>
    <scope>NUCLEOTIDE SEQUENCE [LARGE SCALE GENOMIC DNA]</scope>
    <source>
        <strain>TW-183</strain>
    </source>
</reference>
<gene>
    <name type="ordered locus">CPn_1016</name>
    <name type="ordered locus">CP_0837</name>
    <name type="ordered locus">CPj1016</name>
    <name type="ordered locus">CpB1054</name>
</gene>
<evidence type="ECO:0000256" key="1">
    <source>
        <dbReference type="SAM" id="MobiDB-lite"/>
    </source>
</evidence>
<evidence type="ECO:0000305" key="2"/>
<accession>Q9Z6P3</accession>
<accession>Q9JS57</accession>
<protein>
    <recommendedName>
        <fullName>Protein CPn_1016/CP_0837/CPj1016/CpB1054</fullName>
    </recommendedName>
</protein>
<feature type="chain" id="PRO_0000218434" description="Protein CPn_1016/CP_0837/CPj1016/CpB1054">
    <location>
        <begin position="1"/>
        <end position="619"/>
    </location>
</feature>
<feature type="region of interest" description="Disordered" evidence="1">
    <location>
        <begin position="591"/>
        <end position="619"/>
    </location>
</feature>
<feature type="sequence variant" description="In strain: CWL029 and TW-183.">
    <original>L</original>
    <variation>S</variation>
    <location>
        <position position="619"/>
    </location>
</feature>
<name>Y1016_CHLPN</name>
<proteinExistence type="inferred from homology"/>
<comment type="similarity">
    <text evidence="2">Belongs to the chlamydial CPn_1016/CT_858/TC_0248 family.</text>
</comment>